<keyword id="KW-0597">Phosphoprotein</keyword>
<keyword id="KW-1185">Reference proteome</keyword>
<reference key="1">
    <citation type="submission" date="1995-06" db="EMBL/GenBank/DDBJ databases">
        <authorList>
            <person name="Sor F.J."/>
        </authorList>
    </citation>
    <scope>NUCLEOTIDE SEQUENCE [GENOMIC DNA]</scope>
    <source>
        <strain>ATCC 204508 / S288c</strain>
    </source>
</reference>
<reference key="2">
    <citation type="journal article" date="1995" name="Yeast">
        <title>Sequence of a 17.1 kb DNA fragment from chromosome X of Saccharomyces cerevisiae includes the mitochondrial ribosomal protein L8.</title>
        <authorList>
            <person name="Vandenbol M."/>
            <person name="Durand P."/>
            <person name="Dion C."/>
            <person name="Portetelle D."/>
            <person name="Hilger F."/>
        </authorList>
    </citation>
    <scope>NUCLEOTIDE SEQUENCE [GENOMIC DNA]</scope>
    <source>
        <strain>ATCC 204508 / S288c</strain>
    </source>
</reference>
<reference key="3">
    <citation type="journal article" date="1996" name="EMBO J.">
        <title>Complete nucleotide sequence of Saccharomyces cerevisiae chromosome X.</title>
        <authorList>
            <person name="Galibert F."/>
            <person name="Alexandraki D."/>
            <person name="Baur A."/>
            <person name="Boles E."/>
            <person name="Chalwatzis N."/>
            <person name="Chuat J.-C."/>
            <person name="Coster F."/>
            <person name="Cziepluch C."/>
            <person name="de Haan M."/>
            <person name="Domdey H."/>
            <person name="Durand P."/>
            <person name="Entian K.-D."/>
            <person name="Gatius M."/>
            <person name="Goffeau A."/>
            <person name="Grivell L.A."/>
            <person name="Hennemann A."/>
            <person name="Herbert C.J."/>
            <person name="Heumann K."/>
            <person name="Hilger F."/>
            <person name="Hollenberg C.P."/>
            <person name="Huang M.-E."/>
            <person name="Jacq C."/>
            <person name="Jauniaux J.-C."/>
            <person name="Katsoulou C."/>
            <person name="Kirchrath L."/>
            <person name="Kleine K."/>
            <person name="Kordes E."/>
            <person name="Koetter P."/>
            <person name="Liebl S."/>
            <person name="Louis E.J."/>
            <person name="Manus V."/>
            <person name="Mewes H.-W."/>
            <person name="Miosga T."/>
            <person name="Obermaier B."/>
            <person name="Perea J."/>
            <person name="Pohl T.M."/>
            <person name="Portetelle D."/>
            <person name="Pujol A."/>
            <person name="Purnelle B."/>
            <person name="Ramezani Rad M."/>
            <person name="Rasmussen S.W."/>
            <person name="Rose M."/>
            <person name="Rossau R."/>
            <person name="Schaaff-Gerstenschlaeger I."/>
            <person name="Smits P.H.M."/>
            <person name="Scarcez T."/>
            <person name="Soriano N."/>
            <person name="To Van D."/>
            <person name="Tzermia M."/>
            <person name="Van Broekhoven A."/>
            <person name="Vandenbol M."/>
            <person name="Wedler H."/>
            <person name="von Wettstein D."/>
            <person name="Wambutt R."/>
            <person name="Zagulski M."/>
            <person name="Zollner A."/>
            <person name="Karpfinger-Hartl L."/>
        </authorList>
    </citation>
    <scope>NUCLEOTIDE SEQUENCE [LARGE SCALE GENOMIC DNA]</scope>
    <source>
        <strain>ATCC 204508 / S288c</strain>
    </source>
</reference>
<reference key="4">
    <citation type="journal article" date="2014" name="G3 (Bethesda)">
        <title>The reference genome sequence of Saccharomyces cerevisiae: Then and now.</title>
        <authorList>
            <person name="Engel S.R."/>
            <person name="Dietrich F.S."/>
            <person name="Fisk D.G."/>
            <person name="Binkley G."/>
            <person name="Balakrishnan R."/>
            <person name="Costanzo M.C."/>
            <person name="Dwight S.S."/>
            <person name="Hitz B.C."/>
            <person name="Karra K."/>
            <person name="Nash R.S."/>
            <person name="Weng S."/>
            <person name="Wong E.D."/>
            <person name="Lloyd P."/>
            <person name="Skrzypek M.S."/>
            <person name="Miyasato S.R."/>
            <person name="Simison M."/>
            <person name="Cherry J.M."/>
        </authorList>
    </citation>
    <scope>GENOME REANNOTATION</scope>
    <source>
        <strain>ATCC 204508 / S288c</strain>
    </source>
</reference>
<reference key="5">
    <citation type="journal article" date="2007" name="Genome Res.">
        <title>Approaching a complete repository of sequence-verified protein-encoding clones for Saccharomyces cerevisiae.</title>
        <authorList>
            <person name="Hu Y."/>
            <person name="Rolfs A."/>
            <person name="Bhullar B."/>
            <person name="Murthy T.V.S."/>
            <person name="Zhu C."/>
            <person name="Berger M.F."/>
            <person name="Camargo A.A."/>
            <person name="Kelley F."/>
            <person name="McCarron S."/>
            <person name="Jepson D."/>
            <person name="Richardson A."/>
            <person name="Raphael J."/>
            <person name="Moreira D."/>
            <person name="Taycher E."/>
            <person name="Zuo D."/>
            <person name="Mohr S."/>
            <person name="Kane M.F."/>
            <person name="Williamson J."/>
            <person name="Simpson A.J.G."/>
            <person name="Bulyk M.L."/>
            <person name="Harlow E."/>
            <person name="Marsischky G."/>
            <person name="Kolodner R.D."/>
            <person name="LaBaer J."/>
        </authorList>
    </citation>
    <scope>NUCLEOTIDE SEQUENCE [GENOMIC DNA]</scope>
    <source>
        <strain>ATCC 204508 / S288c</strain>
    </source>
</reference>
<reference key="6">
    <citation type="journal article" date="2003" name="Nature">
        <title>Global analysis of protein localization in budding yeast.</title>
        <authorList>
            <person name="Huh W.-K."/>
            <person name="Falvo J.V."/>
            <person name="Gerke L.C."/>
            <person name="Carroll A.S."/>
            <person name="Howson R.W."/>
            <person name="Weissman J.S."/>
            <person name="O'Shea E.K."/>
        </authorList>
    </citation>
    <scope>SUBCELLULAR LOCATION [LARGE SCALE ANALYSIS]</scope>
</reference>
<reference key="7">
    <citation type="journal article" date="2003" name="Nature">
        <title>Global analysis of protein expression in yeast.</title>
        <authorList>
            <person name="Ghaemmaghami S."/>
            <person name="Huh W.-K."/>
            <person name="Bower K."/>
            <person name="Howson R.W."/>
            <person name="Belle A."/>
            <person name="Dephoure N."/>
            <person name="O'Shea E.K."/>
            <person name="Weissman J.S."/>
        </authorList>
    </citation>
    <scope>LEVEL OF PROTEIN EXPRESSION [LARGE SCALE ANALYSIS]</scope>
</reference>
<reference key="8">
    <citation type="journal article" date="2007" name="J. Proteome Res.">
        <title>Large-scale phosphorylation analysis of alpha-factor-arrested Saccharomyces cerevisiae.</title>
        <authorList>
            <person name="Li X."/>
            <person name="Gerber S.A."/>
            <person name="Rudner A.D."/>
            <person name="Beausoleil S.A."/>
            <person name="Haas W."/>
            <person name="Villen J."/>
            <person name="Elias J.E."/>
            <person name="Gygi S.P."/>
        </authorList>
    </citation>
    <scope>PHOSPHORYLATION [LARGE SCALE ANALYSIS] AT SER-9 AND SER-41</scope>
    <scope>IDENTIFICATION BY MASS SPECTROMETRY [LARGE SCALE ANALYSIS]</scope>
    <source>
        <strain>ADR376</strain>
    </source>
</reference>
<reference key="9">
    <citation type="journal article" date="2008" name="Mol. Cell. Proteomics">
        <title>A multidimensional chromatography technology for in-depth phosphoproteome analysis.</title>
        <authorList>
            <person name="Albuquerque C.P."/>
            <person name="Smolka M.B."/>
            <person name="Payne S.H."/>
            <person name="Bafna V."/>
            <person name="Eng J."/>
            <person name="Zhou H."/>
        </authorList>
    </citation>
    <scope>PHOSPHORYLATION [LARGE SCALE ANALYSIS] AT SER-9 AND SER-41</scope>
    <scope>IDENTIFICATION BY MASS SPECTROMETRY [LARGE SCALE ANALYSIS]</scope>
</reference>
<reference key="10">
    <citation type="journal article" date="2009" name="Science">
        <title>Global analysis of Cdk1 substrate phosphorylation sites provides insights into evolution.</title>
        <authorList>
            <person name="Holt L.J."/>
            <person name="Tuch B.B."/>
            <person name="Villen J."/>
            <person name="Johnson A.D."/>
            <person name="Gygi S.P."/>
            <person name="Morgan D.O."/>
        </authorList>
    </citation>
    <scope>PHOSPHORYLATION [LARGE SCALE ANALYSIS] AT SER-9; SER-41; SER-178 AND SER-180</scope>
    <scope>IDENTIFICATION BY MASS SPECTROMETRY [LARGE SCALE ANALYSIS]</scope>
</reference>
<feature type="chain" id="PRO_0000194416" description="Inactive deaminase YJL070C">
    <location>
        <begin position="1"/>
        <end position="888"/>
    </location>
</feature>
<feature type="region of interest" description="Disordered" evidence="1">
    <location>
        <begin position="1"/>
        <end position="42"/>
    </location>
</feature>
<feature type="compositionally biased region" description="Basic and acidic residues" evidence="1">
    <location>
        <begin position="23"/>
        <end position="34"/>
    </location>
</feature>
<feature type="modified residue" description="Phosphoserine" evidence="4 5 6">
    <location>
        <position position="9"/>
    </location>
</feature>
<feature type="modified residue" description="Phosphoserine" evidence="4 5 6">
    <location>
        <position position="41"/>
    </location>
</feature>
<feature type="modified residue" description="Phosphoserine" evidence="6">
    <location>
        <position position="178"/>
    </location>
</feature>
<feature type="modified residue" description="Phosphoserine" evidence="6">
    <location>
        <position position="180"/>
    </location>
</feature>
<protein>
    <recommendedName>
        <fullName>Inactive deaminase YJL070C</fullName>
    </recommendedName>
</protein>
<organism>
    <name type="scientific">Saccharomyces cerevisiae (strain ATCC 204508 / S288c)</name>
    <name type="common">Baker's yeast</name>
    <dbReference type="NCBI Taxonomy" id="559292"/>
    <lineage>
        <taxon>Eukaryota</taxon>
        <taxon>Fungi</taxon>
        <taxon>Dikarya</taxon>
        <taxon>Ascomycota</taxon>
        <taxon>Saccharomycotina</taxon>
        <taxon>Saccharomycetes</taxon>
        <taxon>Saccharomycetales</taxon>
        <taxon>Saccharomycetaceae</taxon>
        <taxon>Saccharomyces</taxon>
    </lineage>
</organism>
<comment type="interaction">
    <interactant intactId="EBI-25926">
        <id>P40361</id>
    </interactant>
    <interactant intactId="EBI-2548">
        <id>P15274</id>
        <label>AMD1</label>
    </interactant>
    <organismsDiffer>false</organismsDiffer>
    <experiments>3</experiments>
</comment>
<comment type="miscellaneous">
    <text evidence="2">Present with 1100 molecules/cell in log phase SD medium.</text>
</comment>
<comment type="similarity">
    <text evidence="3">Belongs to the metallo-dependent hydrolases superfamily. Adenosine and AMP deaminases family.</text>
</comment>
<comment type="caution">
    <text evidence="3">Lacks the conserved His residues essential for binding the catalytic zinc ion. Lacks the conserved residues important for substrate binding and catalysis. Its enzyme activity is therefore unsure.</text>
</comment>
<sequence>MQAVERRPSLLFDEYQNSVTKPNETKNKEARVLSENDGDVSPSVLKQKEISVDDMDMISLPTEFDRQMVLGSPMFFDLEDEENKIDPLPSVSHHYGNGESDSFVSSYTPSNLKTGEETKDLFINPFELVSQMRKRYIAASKQDGISNIKNDTEKWFLYPKPLPKFWRFEDDKRFQDPSDSDLNDDGDSTGTGAATPHRHGYYYPSYFTDHYYYYTKSGLKGKGNIKVPYTGEYFDLEDYKKQYIYHLSNQENTQNPLSPYSSKEESLEEEFLTDVPTFQEFRDDFAYIIELIQSHKFNEVSRKRLSYLLDKFELFQYLNSKKEILANKNVPYRDFYNSRKVDRDLSLSGCISQRQLSEYIWEKINLEPERIVYQDPETSRKLSLRDIFQFGCSSNDQPIAIGLKLIDDEFLDWYRNIYLIDYHLTPNKVAKLVGKEMRFYLLAKVFLEFDNFIEGEYLAEIFIKYVIHILEKSKYQLAQVSVNFQFYSSGEDWYKKFSQWLLRWKLVSYNIRWNIQIARIFPKLFKENVVSNFQEFLDLIFNPLFTLEKEQLPIDSSVNTDIIGLQFFLSNVCSMDLVIKESDEYYWKEFTDMNCKPKFWTAQGDNPTVAHYMYYIYKSLAKVNFLRSQNLQNTITLRNYCSPLSSRTSQFGVDLYFTDQVESLVCNLLLCNGGLLQVEPLWDTATMIQYLFYLFQIPILAAPLSSVSLLNSQKSTFLKNKNVLLEHDYLKDQETAKINPSRDITVGEQRSYETNPFMKMFKMGLKISLSSKSILYNSSYTLEPLIEEYSVAASIYLLNPTDLCELSRTSVLSSGYEGWYKAHWIGVGVKKAPYFEENVGGIDNWYDTAKDTSIKHNVPMIRRRYRKETLDQEWNFVRDHFGVINSIW</sequence>
<evidence type="ECO:0000256" key="1">
    <source>
        <dbReference type="SAM" id="MobiDB-lite"/>
    </source>
</evidence>
<evidence type="ECO:0000269" key="2">
    <source>
    </source>
</evidence>
<evidence type="ECO:0000305" key="3"/>
<evidence type="ECO:0007744" key="4">
    <source>
    </source>
</evidence>
<evidence type="ECO:0007744" key="5">
    <source>
    </source>
</evidence>
<evidence type="ECO:0007744" key="6">
    <source>
    </source>
</evidence>
<dbReference type="EMBL" id="X88851">
    <property type="protein sequence ID" value="CAA61309.1"/>
    <property type="molecule type" value="Genomic_DNA"/>
</dbReference>
<dbReference type="EMBL" id="Z34288">
    <property type="protein sequence ID" value="CAA84052.1"/>
    <property type="molecule type" value="Genomic_DNA"/>
</dbReference>
<dbReference type="EMBL" id="Z49345">
    <property type="protein sequence ID" value="CAA89362.1"/>
    <property type="molecule type" value="Genomic_DNA"/>
</dbReference>
<dbReference type="EMBL" id="Z49344">
    <property type="protein sequence ID" value="CAA89361.1"/>
    <property type="molecule type" value="Genomic_DNA"/>
</dbReference>
<dbReference type="EMBL" id="AY692645">
    <property type="protein sequence ID" value="AAT92664.1"/>
    <property type="molecule type" value="Genomic_DNA"/>
</dbReference>
<dbReference type="EMBL" id="BK006943">
    <property type="protein sequence ID" value="DAA08729.1"/>
    <property type="molecule type" value="Genomic_DNA"/>
</dbReference>
<dbReference type="PIR" id="S50801">
    <property type="entry name" value="S50801"/>
</dbReference>
<dbReference type="RefSeq" id="NP_012465.3">
    <property type="nucleotide sequence ID" value="NM_001181503.3"/>
</dbReference>
<dbReference type="SMR" id="P40361"/>
<dbReference type="BioGRID" id="33685">
    <property type="interactions" value="157"/>
</dbReference>
<dbReference type="DIP" id="DIP-5674N"/>
<dbReference type="FunCoup" id="P40361">
    <property type="interactions" value="118"/>
</dbReference>
<dbReference type="IntAct" id="P40361">
    <property type="interactions" value="6"/>
</dbReference>
<dbReference type="MINT" id="P40361"/>
<dbReference type="STRING" id="4932.YJL070C"/>
<dbReference type="iPTMnet" id="P40361"/>
<dbReference type="PaxDb" id="4932-YJL070C"/>
<dbReference type="PeptideAtlas" id="P40361"/>
<dbReference type="EnsemblFungi" id="YJL070C_mRNA">
    <property type="protein sequence ID" value="YJL070C"/>
    <property type="gene ID" value="YJL070C"/>
</dbReference>
<dbReference type="GeneID" id="853375"/>
<dbReference type="KEGG" id="sce:YJL070C"/>
<dbReference type="AGR" id="SGD:S000003606"/>
<dbReference type="SGD" id="S000003606">
    <property type="gene designation" value="YJL070C"/>
</dbReference>
<dbReference type="VEuPathDB" id="FungiDB:YJL070C"/>
<dbReference type="eggNOG" id="KOG1096">
    <property type="taxonomic scope" value="Eukaryota"/>
</dbReference>
<dbReference type="GeneTree" id="ENSGT00950000183011"/>
<dbReference type="HOGENOM" id="CLU_003782_2_0_1"/>
<dbReference type="InParanoid" id="P40361"/>
<dbReference type="OMA" id="SYNIRWN"/>
<dbReference type="OrthoDB" id="1723809at2759"/>
<dbReference type="BioCyc" id="YEAST:G3O-31529-MONOMER"/>
<dbReference type="Reactome" id="R-SCE-6798695">
    <property type="pathway name" value="Neutrophil degranulation"/>
</dbReference>
<dbReference type="Reactome" id="R-SCE-74217">
    <property type="pathway name" value="Purine salvage"/>
</dbReference>
<dbReference type="PRO" id="PR:P40361"/>
<dbReference type="Proteomes" id="UP000002311">
    <property type="component" value="Chromosome X"/>
</dbReference>
<dbReference type="RNAct" id="P40361">
    <property type="molecule type" value="protein"/>
</dbReference>
<dbReference type="GO" id="GO:0005737">
    <property type="term" value="C:cytoplasm"/>
    <property type="evidence" value="ECO:0007005"/>
    <property type="project" value="SGD"/>
</dbReference>
<dbReference type="GO" id="GO:0005829">
    <property type="term" value="C:cytosol"/>
    <property type="evidence" value="ECO:0000318"/>
    <property type="project" value="GO_Central"/>
</dbReference>
<dbReference type="GO" id="GO:0005739">
    <property type="term" value="C:mitochondrion"/>
    <property type="evidence" value="ECO:0007005"/>
    <property type="project" value="SGD"/>
</dbReference>
<dbReference type="Gene3D" id="3.20.20.140">
    <property type="entry name" value="Metal-dependent hydrolases"/>
    <property type="match status" value="2"/>
</dbReference>
<dbReference type="InterPro" id="IPR006329">
    <property type="entry name" value="AMPD"/>
</dbReference>
<dbReference type="InterPro" id="IPR032466">
    <property type="entry name" value="Metal_Hydrolase"/>
</dbReference>
<dbReference type="PANTHER" id="PTHR11359">
    <property type="entry name" value="AMP DEAMINASE"/>
    <property type="match status" value="1"/>
</dbReference>
<dbReference type="PANTHER" id="PTHR11359:SF7">
    <property type="entry name" value="INACTIVE DEAMINASE YBR284W-RELATED"/>
    <property type="match status" value="1"/>
</dbReference>
<dbReference type="Pfam" id="PF19326">
    <property type="entry name" value="AMP_deaminase"/>
    <property type="match status" value="2"/>
</dbReference>
<dbReference type="PIRSF" id="PIRSF001251">
    <property type="entry name" value="AMP_deaminase_met"/>
    <property type="match status" value="1"/>
</dbReference>
<dbReference type="SUPFAM" id="SSF51556">
    <property type="entry name" value="Metallo-dependent hydrolases"/>
    <property type="match status" value="1"/>
</dbReference>
<name>YJH0_YEAST</name>
<accession>P40361</accession>
<accession>D6VWB3</accession>
<proteinExistence type="evidence at protein level"/>
<gene>
    <name type="ordered locus">YJL070C</name>
    <name type="ORF">HRD888</name>
    <name type="ORF">J1095</name>
</gene>